<keyword id="KW-0963">Cytoplasm</keyword>
<keyword id="KW-0378">Hydrolase</keyword>
<keyword id="KW-0460">Magnesium</keyword>
<keyword id="KW-0479">Metal-binding</keyword>
<keyword id="KW-1185">Reference proteome</keyword>
<name>MPGP_ECO57</name>
<comment type="catalytic activity">
    <reaction evidence="1">
        <text>2-O-(alpha-D-mannosyl)-3-phosphoglycerate + H2O = (2R)-2-O-(alpha-D-mannosyl)-glycerate + phosphate</text>
        <dbReference type="Rhea" id="RHEA:19309"/>
        <dbReference type="ChEBI" id="CHEBI:15377"/>
        <dbReference type="ChEBI" id="CHEBI:43474"/>
        <dbReference type="ChEBI" id="CHEBI:57541"/>
        <dbReference type="ChEBI" id="CHEBI:57744"/>
        <dbReference type="EC" id="3.1.3.70"/>
    </reaction>
</comment>
<comment type="cofactor">
    <cofactor evidence="1">
        <name>Mg(2+)</name>
        <dbReference type="ChEBI" id="CHEBI:18420"/>
    </cofactor>
</comment>
<comment type="subcellular location">
    <subcellularLocation>
        <location evidence="1">Cytoplasm</location>
    </subcellularLocation>
</comment>
<comment type="similarity">
    <text evidence="1">Belongs to the HAD-like hydrolase superfamily. MPGP family.</text>
</comment>
<proteinExistence type="inferred from homology"/>
<dbReference type="EC" id="3.1.3.70" evidence="1"/>
<dbReference type="EMBL" id="AE005174">
    <property type="protein sequence ID" value="AAG56969.1"/>
    <property type="molecule type" value="Genomic_DNA"/>
</dbReference>
<dbReference type="EMBL" id="BA000007">
    <property type="protein sequence ID" value="BAB36116.1"/>
    <property type="molecule type" value="Genomic_DNA"/>
</dbReference>
<dbReference type="PIR" id="E85813">
    <property type="entry name" value="E85813"/>
</dbReference>
<dbReference type="PIR" id="E90965">
    <property type="entry name" value="E90965"/>
</dbReference>
<dbReference type="RefSeq" id="NP_310720.1">
    <property type="nucleotide sequence ID" value="NC_002695.1"/>
</dbReference>
<dbReference type="RefSeq" id="WP_000491488.1">
    <property type="nucleotide sequence ID" value="NZ_VOAI01000028.1"/>
</dbReference>
<dbReference type="SMR" id="Q8XB99"/>
<dbReference type="STRING" id="155864.Z3045"/>
<dbReference type="GeneID" id="913699"/>
<dbReference type="KEGG" id="ece:Z3045"/>
<dbReference type="KEGG" id="ecs:ECs_2693"/>
<dbReference type="PATRIC" id="fig|386585.9.peg.2821"/>
<dbReference type="eggNOG" id="COG3769">
    <property type="taxonomic scope" value="Bacteria"/>
</dbReference>
<dbReference type="HOGENOM" id="CLU_063016_1_0_6"/>
<dbReference type="OMA" id="KGNRMSH"/>
<dbReference type="Proteomes" id="UP000000558">
    <property type="component" value="Chromosome"/>
</dbReference>
<dbReference type="Proteomes" id="UP000002519">
    <property type="component" value="Chromosome"/>
</dbReference>
<dbReference type="GO" id="GO:0005829">
    <property type="term" value="C:cytosol"/>
    <property type="evidence" value="ECO:0007669"/>
    <property type="project" value="TreeGrafter"/>
</dbReference>
<dbReference type="GO" id="GO:0000287">
    <property type="term" value="F:magnesium ion binding"/>
    <property type="evidence" value="ECO:0007669"/>
    <property type="project" value="UniProtKB-ARBA"/>
</dbReference>
<dbReference type="GO" id="GO:0050531">
    <property type="term" value="F:mannosyl-3-phosphoglycerate phosphatase activity"/>
    <property type="evidence" value="ECO:0007669"/>
    <property type="project" value="UniProtKB-UniRule"/>
</dbReference>
<dbReference type="GO" id="GO:0051479">
    <property type="term" value="P:mannosylglycerate biosynthetic process"/>
    <property type="evidence" value="ECO:0007669"/>
    <property type="project" value="InterPro"/>
</dbReference>
<dbReference type="CDD" id="cd07507">
    <property type="entry name" value="HAD_Pase"/>
    <property type="match status" value="1"/>
</dbReference>
<dbReference type="Gene3D" id="3.40.50.1000">
    <property type="entry name" value="HAD superfamily/HAD-like"/>
    <property type="match status" value="1"/>
</dbReference>
<dbReference type="Gene3D" id="3.30.980.20">
    <property type="entry name" value="Putative mannosyl-3-phosphoglycerate phosphatase, domain 2"/>
    <property type="match status" value="1"/>
</dbReference>
<dbReference type="HAMAP" id="MF_00617">
    <property type="entry name" value="MPGP_rel"/>
    <property type="match status" value="1"/>
</dbReference>
<dbReference type="InterPro" id="IPR036412">
    <property type="entry name" value="HAD-like_sf"/>
</dbReference>
<dbReference type="InterPro" id="IPR006381">
    <property type="entry name" value="HAD-SF-IIB-MPGP"/>
</dbReference>
<dbReference type="InterPro" id="IPR006379">
    <property type="entry name" value="HAD-SF_hydro_IIB"/>
</dbReference>
<dbReference type="InterPro" id="IPR023214">
    <property type="entry name" value="HAD_sf"/>
</dbReference>
<dbReference type="InterPro" id="IPR012815">
    <property type="entry name" value="MPG_Pase"/>
</dbReference>
<dbReference type="NCBIfam" id="TIGR01484">
    <property type="entry name" value="HAD-SF-IIB"/>
    <property type="match status" value="1"/>
</dbReference>
<dbReference type="NCBIfam" id="TIGR01486">
    <property type="entry name" value="HAD-SF-IIB-MPGP"/>
    <property type="match status" value="1"/>
</dbReference>
<dbReference type="NCBIfam" id="TIGR02463">
    <property type="entry name" value="MPGP_rel"/>
    <property type="match status" value="1"/>
</dbReference>
<dbReference type="NCBIfam" id="NF002976">
    <property type="entry name" value="PRK03669.1"/>
    <property type="match status" value="1"/>
</dbReference>
<dbReference type="PANTHER" id="PTHR10000:SF8">
    <property type="entry name" value="HAD SUPERFAMILY HYDROLASE-LIKE, TYPE 3"/>
    <property type="match status" value="1"/>
</dbReference>
<dbReference type="PANTHER" id="PTHR10000">
    <property type="entry name" value="PHOSPHOSERINE PHOSPHATASE"/>
    <property type="match status" value="1"/>
</dbReference>
<dbReference type="Pfam" id="PF08282">
    <property type="entry name" value="Hydrolase_3"/>
    <property type="match status" value="1"/>
</dbReference>
<dbReference type="SFLD" id="SFLDG01142">
    <property type="entry name" value="C2.B.2:_Mannosyl-3-phosphoglyc"/>
    <property type="match status" value="1"/>
</dbReference>
<dbReference type="SFLD" id="SFLDS00003">
    <property type="entry name" value="Haloacid_Dehalogenase"/>
    <property type="match status" value="1"/>
</dbReference>
<dbReference type="SUPFAM" id="SSF56784">
    <property type="entry name" value="HAD-like"/>
    <property type="match status" value="1"/>
</dbReference>
<evidence type="ECO:0000255" key="1">
    <source>
        <dbReference type="HAMAP-Rule" id="MF_00617"/>
    </source>
</evidence>
<feature type="chain" id="PRO_0000184976" description="Mannosyl-3-phosphoglycerate phosphatase">
    <location>
        <begin position="1"/>
        <end position="271"/>
    </location>
</feature>
<feature type="active site" description="Nucleophile" evidence="1">
    <location>
        <position position="13"/>
    </location>
</feature>
<feature type="binding site" evidence="1">
    <location>
        <position position="13"/>
    </location>
    <ligand>
        <name>Mg(2+)</name>
        <dbReference type="ChEBI" id="CHEBI:18420"/>
    </ligand>
</feature>
<feature type="binding site" evidence="1">
    <location>
        <position position="15"/>
    </location>
    <ligand>
        <name>Mg(2+)</name>
        <dbReference type="ChEBI" id="CHEBI:18420"/>
    </ligand>
</feature>
<feature type="binding site" evidence="1">
    <location>
        <position position="214"/>
    </location>
    <ligand>
        <name>Mg(2+)</name>
        <dbReference type="ChEBI" id="CHEBI:18420"/>
    </ligand>
</feature>
<sequence>MFSIQQPLLVFSDLDGTLLDSHSYDWQPAAPWLSRLREANVPVILCSSKTSAEMLYLQKMLGLQGLPLIAENGAVIQLAEQWQEIDGFPRIISGISHGEISQVLNTLREKEHFKFTTFDDVDDATIAEWTGLSRSQAALTQLHEASVTLIWRDSDERMAQFTARLNELGLQFMQGARFWHVLDASAGKDQAANWIIATYQQLSGKRPTTLGLGDGPNDAPLLEVMDYAVIVKGLNREGVHLHDEDPARVWRTQREGPEGWREGLDHFFSAR</sequence>
<organism>
    <name type="scientific">Escherichia coli O157:H7</name>
    <dbReference type="NCBI Taxonomy" id="83334"/>
    <lineage>
        <taxon>Bacteria</taxon>
        <taxon>Pseudomonadati</taxon>
        <taxon>Pseudomonadota</taxon>
        <taxon>Gammaproteobacteria</taxon>
        <taxon>Enterobacterales</taxon>
        <taxon>Enterobacteriaceae</taxon>
        <taxon>Escherichia</taxon>
    </lineage>
</organism>
<reference key="1">
    <citation type="journal article" date="2001" name="Nature">
        <title>Genome sequence of enterohaemorrhagic Escherichia coli O157:H7.</title>
        <authorList>
            <person name="Perna N.T."/>
            <person name="Plunkett G. III"/>
            <person name="Burland V."/>
            <person name="Mau B."/>
            <person name="Glasner J.D."/>
            <person name="Rose D.J."/>
            <person name="Mayhew G.F."/>
            <person name="Evans P.S."/>
            <person name="Gregor J."/>
            <person name="Kirkpatrick H.A."/>
            <person name="Posfai G."/>
            <person name="Hackett J."/>
            <person name="Klink S."/>
            <person name="Boutin A."/>
            <person name="Shao Y."/>
            <person name="Miller L."/>
            <person name="Grotbeck E.J."/>
            <person name="Davis N.W."/>
            <person name="Lim A."/>
            <person name="Dimalanta E.T."/>
            <person name="Potamousis K."/>
            <person name="Apodaca J."/>
            <person name="Anantharaman T.S."/>
            <person name="Lin J."/>
            <person name="Yen G."/>
            <person name="Schwartz D.C."/>
            <person name="Welch R.A."/>
            <person name="Blattner F.R."/>
        </authorList>
    </citation>
    <scope>NUCLEOTIDE SEQUENCE [LARGE SCALE GENOMIC DNA]</scope>
    <source>
        <strain>O157:H7 / EDL933 / ATCC 700927 / EHEC</strain>
    </source>
</reference>
<reference key="2">
    <citation type="journal article" date="2001" name="DNA Res.">
        <title>Complete genome sequence of enterohemorrhagic Escherichia coli O157:H7 and genomic comparison with a laboratory strain K-12.</title>
        <authorList>
            <person name="Hayashi T."/>
            <person name="Makino K."/>
            <person name="Ohnishi M."/>
            <person name="Kurokawa K."/>
            <person name="Ishii K."/>
            <person name="Yokoyama K."/>
            <person name="Han C.-G."/>
            <person name="Ohtsubo E."/>
            <person name="Nakayama K."/>
            <person name="Murata T."/>
            <person name="Tanaka M."/>
            <person name="Tobe T."/>
            <person name="Iida T."/>
            <person name="Takami H."/>
            <person name="Honda T."/>
            <person name="Sasakawa C."/>
            <person name="Ogasawara N."/>
            <person name="Yasunaga T."/>
            <person name="Kuhara S."/>
            <person name="Shiba T."/>
            <person name="Hattori M."/>
            <person name="Shinagawa H."/>
        </authorList>
    </citation>
    <scope>NUCLEOTIDE SEQUENCE [LARGE SCALE GENOMIC DNA]</scope>
    <source>
        <strain>O157:H7 / Sakai / RIMD 0509952 / EHEC</strain>
    </source>
</reference>
<protein>
    <recommendedName>
        <fullName evidence="1">Mannosyl-3-phosphoglycerate phosphatase</fullName>
        <shortName evidence="1">MPGP</shortName>
        <ecNumber evidence="1">3.1.3.70</ecNumber>
    </recommendedName>
</protein>
<accession>Q8XB99</accession>
<gene>
    <name type="primary">yedP</name>
    <name type="ordered locus">Z3045</name>
    <name type="ordered locus">ECs2693</name>
</gene>